<feature type="chain" id="PRO_1000073570" description="Phosphoglucosamine mutase">
    <location>
        <begin position="1"/>
        <end position="446"/>
    </location>
</feature>
<feature type="active site" description="Phosphoserine intermediate" evidence="1">
    <location>
        <position position="99"/>
    </location>
</feature>
<feature type="binding site" description="via phosphate group" evidence="1">
    <location>
        <position position="99"/>
    </location>
    <ligand>
        <name>Mg(2+)</name>
        <dbReference type="ChEBI" id="CHEBI:18420"/>
    </ligand>
</feature>
<feature type="binding site" evidence="1">
    <location>
        <position position="242"/>
    </location>
    <ligand>
        <name>Mg(2+)</name>
        <dbReference type="ChEBI" id="CHEBI:18420"/>
    </ligand>
</feature>
<feature type="binding site" evidence="1">
    <location>
        <position position="244"/>
    </location>
    <ligand>
        <name>Mg(2+)</name>
        <dbReference type="ChEBI" id="CHEBI:18420"/>
    </ligand>
</feature>
<feature type="binding site" evidence="1">
    <location>
        <position position="246"/>
    </location>
    <ligand>
        <name>Mg(2+)</name>
        <dbReference type="ChEBI" id="CHEBI:18420"/>
    </ligand>
</feature>
<feature type="modified residue" description="Phosphoserine" evidence="1">
    <location>
        <position position="99"/>
    </location>
</feature>
<evidence type="ECO:0000255" key="1">
    <source>
        <dbReference type="HAMAP-Rule" id="MF_01554"/>
    </source>
</evidence>
<protein>
    <recommendedName>
        <fullName evidence="1">Phosphoglucosamine mutase</fullName>
        <ecNumber evidence="1">5.4.2.10</ecNumber>
    </recommendedName>
</protein>
<reference key="1">
    <citation type="submission" date="2007-10" db="EMBL/GenBank/DDBJ databases">
        <title>Genome sequence of Campylobacter concisus 13826 isolated from human feces.</title>
        <authorList>
            <person name="Fouts D.E."/>
            <person name="Mongodin E.F."/>
            <person name="Puiu D."/>
            <person name="Sebastian Y."/>
            <person name="Miller W.G."/>
            <person name="Mandrell R.E."/>
            <person name="On S."/>
            <person name="Nelson K.E."/>
        </authorList>
    </citation>
    <scope>NUCLEOTIDE SEQUENCE [LARGE SCALE GENOMIC DNA]</scope>
    <source>
        <strain>13826</strain>
    </source>
</reference>
<dbReference type="EC" id="5.4.2.10" evidence="1"/>
<dbReference type="EMBL" id="CP000792">
    <property type="protein sequence ID" value="EAT99044.1"/>
    <property type="molecule type" value="Genomic_DNA"/>
</dbReference>
<dbReference type="RefSeq" id="WP_004317384.1">
    <property type="nucleotide sequence ID" value="NC_009802.2"/>
</dbReference>
<dbReference type="SMR" id="A7ZB08"/>
<dbReference type="STRING" id="360104.CCC13826_1807"/>
<dbReference type="KEGG" id="cco:CCC13826_1807"/>
<dbReference type="eggNOG" id="COG1109">
    <property type="taxonomic scope" value="Bacteria"/>
</dbReference>
<dbReference type="HOGENOM" id="CLU_016950_7_0_7"/>
<dbReference type="OrthoDB" id="9806956at2"/>
<dbReference type="Proteomes" id="UP000001121">
    <property type="component" value="Chromosome"/>
</dbReference>
<dbReference type="GO" id="GO:0005829">
    <property type="term" value="C:cytosol"/>
    <property type="evidence" value="ECO:0007669"/>
    <property type="project" value="TreeGrafter"/>
</dbReference>
<dbReference type="GO" id="GO:0000287">
    <property type="term" value="F:magnesium ion binding"/>
    <property type="evidence" value="ECO:0007669"/>
    <property type="project" value="UniProtKB-UniRule"/>
</dbReference>
<dbReference type="GO" id="GO:0008966">
    <property type="term" value="F:phosphoglucosamine mutase activity"/>
    <property type="evidence" value="ECO:0007669"/>
    <property type="project" value="UniProtKB-UniRule"/>
</dbReference>
<dbReference type="GO" id="GO:0004615">
    <property type="term" value="F:phosphomannomutase activity"/>
    <property type="evidence" value="ECO:0007669"/>
    <property type="project" value="TreeGrafter"/>
</dbReference>
<dbReference type="GO" id="GO:0005975">
    <property type="term" value="P:carbohydrate metabolic process"/>
    <property type="evidence" value="ECO:0007669"/>
    <property type="project" value="InterPro"/>
</dbReference>
<dbReference type="GO" id="GO:0009252">
    <property type="term" value="P:peptidoglycan biosynthetic process"/>
    <property type="evidence" value="ECO:0007669"/>
    <property type="project" value="TreeGrafter"/>
</dbReference>
<dbReference type="GO" id="GO:0006048">
    <property type="term" value="P:UDP-N-acetylglucosamine biosynthetic process"/>
    <property type="evidence" value="ECO:0007669"/>
    <property type="project" value="TreeGrafter"/>
</dbReference>
<dbReference type="CDD" id="cd05802">
    <property type="entry name" value="GlmM"/>
    <property type="match status" value="1"/>
</dbReference>
<dbReference type="FunFam" id="3.40.120.10:FF:000001">
    <property type="entry name" value="Phosphoglucosamine mutase"/>
    <property type="match status" value="1"/>
</dbReference>
<dbReference type="FunFam" id="3.40.120.10:FF:000003">
    <property type="entry name" value="Phosphoglucosamine mutase"/>
    <property type="match status" value="1"/>
</dbReference>
<dbReference type="Gene3D" id="3.40.120.10">
    <property type="entry name" value="Alpha-D-Glucose-1,6-Bisphosphate, subunit A, domain 3"/>
    <property type="match status" value="3"/>
</dbReference>
<dbReference type="Gene3D" id="3.30.310.50">
    <property type="entry name" value="Alpha-D-phosphohexomutase, C-terminal domain"/>
    <property type="match status" value="1"/>
</dbReference>
<dbReference type="HAMAP" id="MF_01554_B">
    <property type="entry name" value="GlmM_B"/>
    <property type="match status" value="1"/>
</dbReference>
<dbReference type="InterPro" id="IPR005844">
    <property type="entry name" value="A-D-PHexomutase_a/b/a-I"/>
</dbReference>
<dbReference type="InterPro" id="IPR016055">
    <property type="entry name" value="A-D-PHexomutase_a/b/a-I/II/III"/>
</dbReference>
<dbReference type="InterPro" id="IPR005845">
    <property type="entry name" value="A-D-PHexomutase_a/b/a-II"/>
</dbReference>
<dbReference type="InterPro" id="IPR005846">
    <property type="entry name" value="A-D-PHexomutase_a/b/a-III"/>
</dbReference>
<dbReference type="InterPro" id="IPR005843">
    <property type="entry name" value="A-D-PHexomutase_C"/>
</dbReference>
<dbReference type="InterPro" id="IPR036900">
    <property type="entry name" value="A-D-PHexomutase_C_sf"/>
</dbReference>
<dbReference type="InterPro" id="IPR016066">
    <property type="entry name" value="A-D-PHexomutase_CS"/>
</dbReference>
<dbReference type="InterPro" id="IPR005841">
    <property type="entry name" value="Alpha-D-phosphohexomutase_SF"/>
</dbReference>
<dbReference type="InterPro" id="IPR006352">
    <property type="entry name" value="GlmM_bact"/>
</dbReference>
<dbReference type="InterPro" id="IPR050060">
    <property type="entry name" value="Phosphoglucosamine_mutase"/>
</dbReference>
<dbReference type="NCBIfam" id="TIGR01455">
    <property type="entry name" value="glmM"/>
    <property type="match status" value="1"/>
</dbReference>
<dbReference type="NCBIfam" id="NF008139">
    <property type="entry name" value="PRK10887.1"/>
    <property type="match status" value="1"/>
</dbReference>
<dbReference type="PANTHER" id="PTHR42946:SF1">
    <property type="entry name" value="PHOSPHOGLUCOMUTASE (ALPHA-D-GLUCOSE-1,6-BISPHOSPHATE-DEPENDENT)"/>
    <property type="match status" value="1"/>
</dbReference>
<dbReference type="PANTHER" id="PTHR42946">
    <property type="entry name" value="PHOSPHOHEXOSE MUTASE"/>
    <property type="match status" value="1"/>
</dbReference>
<dbReference type="Pfam" id="PF02878">
    <property type="entry name" value="PGM_PMM_I"/>
    <property type="match status" value="1"/>
</dbReference>
<dbReference type="Pfam" id="PF02879">
    <property type="entry name" value="PGM_PMM_II"/>
    <property type="match status" value="1"/>
</dbReference>
<dbReference type="Pfam" id="PF02880">
    <property type="entry name" value="PGM_PMM_III"/>
    <property type="match status" value="1"/>
</dbReference>
<dbReference type="Pfam" id="PF00408">
    <property type="entry name" value="PGM_PMM_IV"/>
    <property type="match status" value="1"/>
</dbReference>
<dbReference type="PRINTS" id="PR00509">
    <property type="entry name" value="PGMPMM"/>
</dbReference>
<dbReference type="SUPFAM" id="SSF55957">
    <property type="entry name" value="Phosphoglucomutase, C-terminal domain"/>
    <property type="match status" value="1"/>
</dbReference>
<dbReference type="SUPFAM" id="SSF53738">
    <property type="entry name" value="Phosphoglucomutase, first 3 domains"/>
    <property type="match status" value="3"/>
</dbReference>
<dbReference type="PROSITE" id="PS00710">
    <property type="entry name" value="PGM_PMM"/>
    <property type="match status" value="1"/>
</dbReference>
<proteinExistence type="inferred from homology"/>
<name>GLMM_CAMC1</name>
<sequence>MKLFGTDGVRGKAGEKLSAQTSMRLAMAAGIYFRKTSATNVILVGKDTRKSGYMIETAIVAGLTAVGYNVLQIGPMPTPAIAFLTENMRCDAGIMISASHNPYYDNGIKFFDSFGNKLDETIEAEIEKIFYDDELIANAQKTMTEIGANKRIDDVIGRYIVQIKNSFPKELNLKNLRVVLDVANGAAYKVAPTVFSELGADVIVINNEPNGSNINQNCGALHPEDLASEVKRLRADIGFAFDGDADRLVVVDENGEVVHGDAILGSLAAFLHEQKALKGGAIVATVMSNAALDDYLKAHKIKLLRSNVGDKYVLEMMKENGINFGGEQSGHVIFNDYAKTGDGLVTSMQVVAMMLKKGKKASEIFGELKPYPQILLNLKITEKKPLDKIEGLKELEASLAKEGIRSLFRYSGTENLIRLLLEGKNQTLVEKRMDEVEKFFVKALNA</sequence>
<comment type="function">
    <text evidence="1">Catalyzes the conversion of glucosamine-6-phosphate to glucosamine-1-phosphate.</text>
</comment>
<comment type="catalytic activity">
    <reaction evidence="1">
        <text>alpha-D-glucosamine 1-phosphate = D-glucosamine 6-phosphate</text>
        <dbReference type="Rhea" id="RHEA:23424"/>
        <dbReference type="ChEBI" id="CHEBI:58516"/>
        <dbReference type="ChEBI" id="CHEBI:58725"/>
        <dbReference type="EC" id="5.4.2.10"/>
    </reaction>
</comment>
<comment type="cofactor">
    <cofactor evidence="1">
        <name>Mg(2+)</name>
        <dbReference type="ChEBI" id="CHEBI:18420"/>
    </cofactor>
    <text evidence="1">Binds 1 Mg(2+) ion per subunit.</text>
</comment>
<comment type="PTM">
    <text evidence="1">Activated by phosphorylation.</text>
</comment>
<comment type="similarity">
    <text evidence="1">Belongs to the phosphohexose mutase family.</text>
</comment>
<keyword id="KW-0413">Isomerase</keyword>
<keyword id="KW-0460">Magnesium</keyword>
<keyword id="KW-0479">Metal-binding</keyword>
<keyword id="KW-0597">Phosphoprotein</keyword>
<gene>
    <name evidence="1" type="primary">glmM</name>
    <name type="ordered locus">Ccon26_00450</name>
    <name type="ORF">CCC13826_1807</name>
</gene>
<organism>
    <name type="scientific">Campylobacter concisus (strain 13826)</name>
    <dbReference type="NCBI Taxonomy" id="360104"/>
    <lineage>
        <taxon>Bacteria</taxon>
        <taxon>Pseudomonadati</taxon>
        <taxon>Campylobacterota</taxon>
        <taxon>Epsilonproteobacteria</taxon>
        <taxon>Campylobacterales</taxon>
        <taxon>Campylobacteraceae</taxon>
        <taxon>Campylobacter</taxon>
    </lineage>
</organism>
<accession>A7ZB08</accession>